<gene>
    <name evidence="9" type="primary">cmr2</name>
    <name type="ordered locus">PF1129</name>
</gene>
<feature type="chain" id="PRO_0000418073" description="CRISPR system Cmr subunit Cmr2">
    <location>
        <begin position="1"/>
        <end position="871"/>
    </location>
</feature>
<feature type="domain" description="GGDEF" evidence="1">
    <location>
        <begin position="592"/>
        <end position="752"/>
    </location>
</feature>
<feature type="region of interest" description="Not required for target RNA cleavage" evidence="3">
    <location>
        <begin position="1"/>
        <end position="215"/>
    </location>
</feature>
<feature type="binding site" evidence="8">
    <location>
        <position position="13"/>
    </location>
    <ligand>
        <name>Mn(2+)</name>
        <dbReference type="ChEBI" id="CHEBI:29035"/>
        <label>1</label>
    </ligand>
</feature>
<feature type="binding site" evidence="8">
    <location>
        <position position="14"/>
    </location>
    <ligand>
        <name>Mn(2+)</name>
        <dbReference type="ChEBI" id="CHEBI:29035"/>
        <label>1</label>
    </ligand>
</feature>
<feature type="binding site" evidence="8">
    <location>
        <position position="14"/>
    </location>
    <ligand>
        <name>Mn(2+)</name>
        <dbReference type="ChEBI" id="CHEBI:29035"/>
        <label>2</label>
    </ligand>
</feature>
<feature type="binding site" evidence="8">
    <location>
        <position position="25"/>
    </location>
    <ligand>
        <name>Mn(2+)</name>
        <dbReference type="ChEBI" id="CHEBI:29035"/>
        <label>2</label>
    </ligand>
</feature>
<feature type="binding site" evidence="3 4 5 6 8">
    <location>
        <position position="448"/>
    </location>
    <ligand>
        <name>Zn(2+)</name>
        <dbReference type="ChEBI" id="CHEBI:29105"/>
    </ligand>
</feature>
<feature type="binding site" evidence="3 4 5 6 8">
    <location>
        <position position="451"/>
    </location>
    <ligand>
        <name>Zn(2+)</name>
        <dbReference type="ChEBI" id="CHEBI:29105"/>
    </ligand>
</feature>
<feature type="binding site" evidence="3 4 5 6 8">
    <location>
        <position position="478"/>
    </location>
    <ligand>
        <name>Zn(2+)</name>
        <dbReference type="ChEBI" id="CHEBI:29105"/>
    </ligand>
</feature>
<feature type="binding site" evidence="3 4 5 6 8">
    <location>
        <position position="481"/>
    </location>
    <ligand>
        <name>Zn(2+)</name>
        <dbReference type="ChEBI" id="CHEBI:29105"/>
    </ligand>
</feature>
<feature type="binding site" evidence="8 11">
    <location>
        <position position="600"/>
    </location>
    <ligand>
        <name>Mn(2+)</name>
        <dbReference type="ChEBI" id="CHEBI:29035"/>
        <label>3</label>
    </ligand>
</feature>
<feature type="binding site" evidence="8">
    <location>
        <position position="656"/>
    </location>
    <ligand>
        <name>Mn(2+)</name>
        <dbReference type="ChEBI" id="CHEBI:29035"/>
        <label>4</label>
    </ligand>
</feature>
<feature type="binding site" evidence="8 11">
    <location>
        <position position="673"/>
    </location>
    <ligand>
        <name>Mn(2+)</name>
        <dbReference type="ChEBI" id="CHEBI:29035"/>
        <label>3</label>
    </ligand>
</feature>
<feature type="binding site" evidence="8 11">
    <location>
        <position position="674"/>
    </location>
    <ligand>
        <name>Mn(2+)</name>
        <dbReference type="ChEBI" id="CHEBI:29035"/>
        <label>3</label>
    </ligand>
</feature>
<feature type="binding site" evidence="8">
    <location>
        <position position="694"/>
    </location>
    <ligand>
        <name>Mn(2+)</name>
        <dbReference type="ChEBI" id="CHEBI:29035"/>
        <label>4</label>
    </ligand>
</feature>
<feature type="binding site" evidence="8">
    <location>
        <position position="700"/>
    </location>
    <ligand>
        <name>Mn(2+)</name>
        <dbReference type="ChEBI" id="CHEBI:29035"/>
        <label>4</label>
    </ligand>
</feature>
<feature type="mutagenesis site" description="No effect on pre-crRNA cleavage." evidence="3">
    <original>S</original>
    <variation>A</variation>
    <location>
        <position position="246"/>
    </location>
</feature>
<feature type="mutagenesis site" description="No effect on pre-crRNA cleavage." evidence="3">
    <original>S</original>
    <variation>A</variation>
    <location>
        <position position="250"/>
    </location>
</feature>
<feature type="mutagenesis site" description="No effect on pre-crRNA cleavage." evidence="3">
    <original>D</original>
    <variation>N</variation>
    <location>
        <position position="600"/>
    </location>
</feature>
<feature type="mutagenesis site" description="No effect on pre-crRNA cleavage." evidence="3">
    <original>DD</original>
    <variation>NN</variation>
    <location>
        <begin position="673"/>
        <end position="674"/>
    </location>
</feature>
<feature type="mutagenesis site" description="No effect on pre-crRNA cleavage." evidence="3">
    <original>D</original>
    <variation>N</variation>
    <location>
        <position position="673"/>
    </location>
</feature>
<feature type="helix" evidence="17">
    <location>
        <begin position="4"/>
        <end position="11"/>
    </location>
</feature>
<feature type="turn" evidence="17">
    <location>
        <begin position="16"/>
        <end position="20"/>
    </location>
</feature>
<feature type="helix" evidence="17">
    <location>
        <begin position="25"/>
        <end position="34"/>
    </location>
</feature>
<feature type="helix" evidence="17">
    <location>
        <begin position="45"/>
        <end position="56"/>
    </location>
</feature>
<feature type="turn" evidence="17">
    <location>
        <begin position="92"/>
        <end position="94"/>
    </location>
</feature>
<feature type="helix" evidence="17">
    <location>
        <begin position="101"/>
        <end position="114"/>
    </location>
</feature>
<feature type="helix" evidence="17">
    <location>
        <begin position="116"/>
        <end position="144"/>
    </location>
</feature>
<feature type="helix" evidence="17">
    <location>
        <begin position="149"/>
        <end position="174"/>
    </location>
</feature>
<feature type="helix" evidence="17">
    <location>
        <begin position="180"/>
        <end position="191"/>
    </location>
</feature>
<feature type="strand" evidence="17">
    <location>
        <begin position="197"/>
        <end position="199"/>
    </location>
</feature>
<feature type="helix" evidence="17">
    <location>
        <begin position="204"/>
        <end position="214"/>
    </location>
</feature>
<feature type="strand" evidence="14">
    <location>
        <begin position="219"/>
        <end position="227"/>
    </location>
</feature>
<feature type="helix" evidence="14">
    <location>
        <begin position="230"/>
        <end position="234"/>
    </location>
</feature>
<feature type="helix" evidence="14">
    <location>
        <begin position="239"/>
        <end position="264"/>
    </location>
</feature>
<feature type="helix" evidence="14">
    <location>
        <begin position="266"/>
        <end position="268"/>
    </location>
</feature>
<feature type="strand" evidence="14">
    <location>
        <begin position="269"/>
        <end position="272"/>
    </location>
</feature>
<feature type="helix" evidence="14">
    <location>
        <begin position="278"/>
        <end position="283"/>
    </location>
</feature>
<feature type="helix" evidence="14">
    <location>
        <begin position="291"/>
        <end position="294"/>
    </location>
</feature>
<feature type="strand" evidence="14">
    <location>
        <begin position="300"/>
        <end position="307"/>
    </location>
</feature>
<feature type="helix" evidence="14">
    <location>
        <begin position="308"/>
        <end position="310"/>
    </location>
</feature>
<feature type="helix" evidence="14">
    <location>
        <begin position="311"/>
        <end position="339"/>
    </location>
</feature>
<feature type="helix" evidence="14">
    <location>
        <begin position="347"/>
        <end position="349"/>
    </location>
</feature>
<feature type="helix" evidence="14">
    <location>
        <begin position="350"/>
        <end position="353"/>
    </location>
</feature>
<feature type="helix" evidence="14">
    <location>
        <begin position="356"/>
        <end position="364"/>
    </location>
</feature>
<feature type="strand" evidence="14">
    <location>
        <begin position="367"/>
        <end position="376"/>
    </location>
</feature>
<feature type="strand" evidence="14">
    <location>
        <begin position="378"/>
        <end position="380"/>
    </location>
</feature>
<feature type="helix" evidence="14">
    <location>
        <begin position="381"/>
        <end position="388"/>
    </location>
</feature>
<feature type="helix" evidence="13">
    <location>
        <begin position="393"/>
        <end position="405"/>
    </location>
</feature>
<feature type="strand" evidence="14">
    <location>
        <begin position="410"/>
        <end position="412"/>
    </location>
</feature>
<feature type="helix" evidence="14">
    <location>
        <begin position="413"/>
        <end position="416"/>
    </location>
</feature>
<feature type="helix" evidence="14">
    <location>
        <begin position="417"/>
        <end position="433"/>
    </location>
</feature>
<feature type="turn" evidence="14">
    <location>
        <begin position="434"/>
        <end position="437"/>
    </location>
</feature>
<feature type="turn" evidence="14">
    <location>
        <begin position="449"/>
        <end position="451"/>
    </location>
</feature>
<feature type="strand" evidence="14">
    <location>
        <begin position="452"/>
        <end position="455"/>
    </location>
</feature>
<feature type="turn" evidence="14">
    <location>
        <begin position="457"/>
        <end position="461"/>
    </location>
</feature>
<feature type="helix" evidence="14">
    <location>
        <begin position="464"/>
        <end position="469"/>
    </location>
</feature>
<feature type="helix" evidence="14">
    <location>
        <begin position="472"/>
        <end position="474"/>
    </location>
</feature>
<feature type="helix" evidence="14">
    <location>
        <begin position="479"/>
        <end position="495"/>
    </location>
</feature>
<feature type="helix" evidence="14">
    <location>
        <begin position="504"/>
        <end position="508"/>
    </location>
</feature>
<feature type="helix" evidence="14">
    <location>
        <begin position="509"/>
        <end position="513"/>
    </location>
</feature>
<feature type="helix" evidence="14">
    <location>
        <begin position="514"/>
        <end position="533"/>
    </location>
</feature>
<feature type="helix" evidence="14">
    <location>
        <begin position="535"/>
        <end position="537"/>
    </location>
</feature>
<feature type="strand" evidence="14">
    <location>
        <begin position="542"/>
        <end position="545"/>
    </location>
</feature>
<feature type="helix" evidence="14">
    <location>
        <begin position="546"/>
        <end position="549"/>
    </location>
</feature>
<feature type="helix" evidence="14">
    <location>
        <begin position="551"/>
        <end position="555"/>
    </location>
</feature>
<feature type="turn" evidence="15">
    <location>
        <begin position="559"/>
        <end position="561"/>
    </location>
</feature>
<feature type="helix" evidence="14">
    <location>
        <begin position="571"/>
        <end position="587"/>
    </location>
</feature>
<feature type="strand" evidence="14">
    <location>
        <begin position="593"/>
        <end position="601"/>
    </location>
</feature>
<feature type="helix" evidence="13">
    <location>
        <begin position="604"/>
        <end position="612"/>
    </location>
</feature>
<feature type="helix" evidence="17">
    <location>
        <begin position="617"/>
        <end position="619"/>
    </location>
</feature>
<feature type="helix" evidence="17">
    <location>
        <begin position="622"/>
        <end position="624"/>
    </location>
</feature>
<feature type="turn" evidence="17">
    <location>
        <begin position="625"/>
        <end position="627"/>
    </location>
</feature>
<feature type="strand" evidence="17">
    <location>
        <begin position="632"/>
        <end position="634"/>
    </location>
</feature>
<feature type="helix" evidence="14">
    <location>
        <begin position="639"/>
        <end position="654"/>
    </location>
</feature>
<feature type="helix" evidence="14">
    <location>
        <begin position="656"/>
        <end position="661"/>
    </location>
</feature>
<feature type="strand" evidence="14">
    <location>
        <begin position="664"/>
        <end position="670"/>
    </location>
</feature>
<feature type="strand" evidence="14">
    <location>
        <begin position="675"/>
        <end position="680"/>
    </location>
</feature>
<feature type="turn" evidence="14">
    <location>
        <begin position="681"/>
        <end position="683"/>
    </location>
</feature>
<feature type="helix" evidence="14">
    <location>
        <begin position="684"/>
        <end position="698"/>
    </location>
</feature>
<feature type="strand" evidence="16">
    <location>
        <begin position="703"/>
        <end position="705"/>
    </location>
</feature>
<feature type="strand" evidence="14">
    <location>
        <begin position="710"/>
        <end position="718"/>
    </location>
</feature>
<feature type="helix" evidence="14">
    <location>
        <begin position="723"/>
        <end position="736"/>
    </location>
</feature>
<feature type="helix" evidence="14">
    <location>
        <begin position="738"/>
        <end position="740"/>
    </location>
</feature>
<feature type="strand" evidence="15">
    <location>
        <begin position="741"/>
        <end position="743"/>
    </location>
</feature>
<feature type="strand" evidence="14">
    <location>
        <begin position="746"/>
        <end position="752"/>
    </location>
</feature>
<feature type="strand" evidence="14">
    <location>
        <begin position="754"/>
        <end position="756"/>
    </location>
</feature>
<feature type="strand" evidence="14">
    <location>
        <begin position="758"/>
        <end position="764"/>
    </location>
</feature>
<feature type="helix" evidence="14">
    <location>
        <begin position="766"/>
        <end position="772"/>
    </location>
</feature>
<feature type="helix" evidence="14">
    <location>
        <begin position="775"/>
        <end position="780"/>
    </location>
</feature>
<feature type="helix" evidence="14">
    <location>
        <begin position="789"/>
        <end position="798"/>
    </location>
</feature>
<feature type="helix" evidence="14">
    <location>
        <begin position="799"/>
        <end position="801"/>
    </location>
</feature>
<feature type="helix" evidence="14">
    <location>
        <begin position="804"/>
        <end position="806"/>
    </location>
</feature>
<feature type="helix" evidence="14">
    <location>
        <begin position="807"/>
        <end position="818"/>
    </location>
</feature>
<feature type="helix" evidence="14">
    <location>
        <begin position="824"/>
        <end position="842"/>
    </location>
</feature>
<feature type="strand" evidence="12">
    <location>
        <begin position="847"/>
        <end position="849"/>
    </location>
</feature>
<feature type="helix" evidence="14">
    <location>
        <begin position="850"/>
        <end position="864"/>
    </location>
</feature>
<feature type="turn" evidence="14">
    <location>
        <begin position="867"/>
        <end position="869"/>
    </location>
</feature>
<protein>
    <recommendedName>
        <fullName>CRISPR system Cmr subunit Cmr2</fullName>
    </recommendedName>
    <alternativeName>
        <fullName>CRISPR-associated protein Cas10/Cmr2, subtype III-B</fullName>
    </alternativeName>
</protein>
<evidence type="ECO:0000255" key="1">
    <source>
        <dbReference type="PROSITE-ProRule" id="PRU00095"/>
    </source>
</evidence>
<evidence type="ECO:0000269" key="2">
    <source>
    </source>
</evidence>
<evidence type="ECO:0000269" key="3">
    <source>
    </source>
</evidence>
<evidence type="ECO:0000269" key="4">
    <source>
    </source>
</evidence>
<evidence type="ECO:0000269" key="5">
    <source>
    </source>
</evidence>
<evidence type="ECO:0000269" key="6">
    <source>
    </source>
</evidence>
<evidence type="ECO:0000269" key="7">
    <source>
    </source>
</evidence>
<evidence type="ECO:0000269" key="8">
    <source>
    </source>
</evidence>
<evidence type="ECO:0000303" key="9">
    <source>
    </source>
</evidence>
<evidence type="ECO:0000305" key="10"/>
<evidence type="ECO:0000305" key="11">
    <source>
    </source>
</evidence>
<evidence type="ECO:0007829" key="12">
    <source>
        <dbReference type="PDB" id="3UNG"/>
    </source>
</evidence>
<evidence type="ECO:0007829" key="13">
    <source>
        <dbReference type="PDB" id="3W2W"/>
    </source>
</evidence>
<evidence type="ECO:0007829" key="14">
    <source>
        <dbReference type="PDB" id="3X1L"/>
    </source>
</evidence>
<evidence type="ECO:0007829" key="15">
    <source>
        <dbReference type="PDB" id="4DOZ"/>
    </source>
</evidence>
<evidence type="ECO:0007829" key="16">
    <source>
        <dbReference type="PDB" id="4H4K"/>
    </source>
</evidence>
<evidence type="ECO:0007829" key="17">
    <source>
        <dbReference type="PDB" id="4W8Y"/>
    </source>
</evidence>
<organism>
    <name type="scientific">Pyrococcus furiosus (strain ATCC 43587 / DSM 3638 / JCM 8422 / Vc1)</name>
    <dbReference type="NCBI Taxonomy" id="186497"/>
    <lineage>
        <taxon>Archaea</taxon>
        <taxon>Methanobacteriati</taxon>
        <taxon>Methanobacteriota</taxon>
        <taxon>Thermococci</taxon>
        <taxon>Thermococcales</taxon>
        <taxon>Thermococcaceae</taxon>
        <taxon>Pyrococcus</taxon>
    </lineage>
</organism>
<reference key="1">
    <citation type="journal article" date="1999" name="Genetics">
        <title>Divergence of the hyperthermophilic archaea Pyrococcus furiosus and P. horikoshii inferred from complete genomic sequences.</title>
        <authorList>
            <person name="Maeder D.L."/>
            <person name="Weiss R.B."/>
            <person name="Dunn D.M."/>
            <person name="Cherry J.L."/>
            <person name="Gonzalez J.M."/>
            <person name="DiRuggiero J."/>
            <person name="Robb F.T."/>
        </authorList>
    </citation>
    <scope>NUCLEOTIDE SEQUENCE [LARGE SCALE GENOMIC DNA]</scope>
    <source>
        <strain>ATCC 43587 / DSM 3638 / JCM 8422 / Vc1</strain>
    </source>
</reference>
<reference key="2">
    <citation type="journal article" date="2009" name="Cell">
        <title>RNA-guided RNA cleavage by a CRISPR RNA-Cas protein complex.</title>
        <authorList>
            <person name="Hale C.R."/>
            <person name="Zhao P."/>
            <person name="Olson S."/>
            <person name="Duff M.O."/>
            <person name="Graveley B.R."/>
            <person name="Wells L."/>
            <person name="Terns R.M."/>
            <person name="Terns M.P."/>
        </authorList>
    </citation>
    <scope>IDENTIFICATION BY MASS SPECTROMETRY</scope>
    <scope>FUNCTION IN CMR COMPLEX</scope>
    <scope>SUBCELLULAR LOCATION</scope>
    <scope>SUBUNIT</scope>
    <source>
        <strain>ATCC 43587 / DSM 3638 / JCM 8422 / Vc1</strain>
    </source>
</reference>
<reference key="3">
    <citation type="journal article" date="2012" name="FEBS Lett.">
        <title>Crystal structure of Cmr2 suggests a nucleotide cyclase-related enzyme in type III CRISPR-Cas systems.</title>
        <authorList>
            <person name="Zhu X."/>
            <person name="Ye K."/>
        </authorList>
    </citation>
    <scope>X-RAY CRYSTALLOGRAPHY (3.10 ANGSTROMS) OF 195-817 IN COMPLEX WITH ZINC</scope>
    <scope>COFACTOR</scope>
    <source>
        <strain>ATCC 43587 / DSM 3638 / JCM 8422 / Vc1</strain>
    </source>
</reference>
<reference key="4">
    <citation type="journal article" date="2012" name="Structure">
        <title>Structure of the Cmr2 subunit of the CRISPR-Cas RNA silencing complex.</title>
        <authorList>
            <person name="Cocozaki A.I."/>
            <person name="Ramia N.F."/>
            <person name="Shao Y."/>
            <person name="Hale C.R."/>
            <person name="Terns R.M."/>
            <person name="Terns M.P."/>
            <person name="Li H."/>
        </authorList>
    </citation>
    <scope>X-RAY CRYSTALLOGRAPHY (2.31 ANGSTROMS) OF 215-817 IN COMPLEX WITH CALCIUM; ZINC WITH AND WITHOUT ADP</scope>
    <scope>FUNCTION</scope>
    <scope>COFACTOR</scope>
    <scope>MUTAGENESIS OF SER-246; SER-250; ASP-600; ASP-673 AND 673-ASN-ASP-674</scope>
    <source>
        <strain>ATCC 43587 / DSM 3638 / JCM 8422 / Vc1</strain>
    </source>
</reference>
<reference key="5">
    <citation type="journal article" date="2013" name="J. Mol. Biol.">
        <title>Crystal structure of the Cmr2-Cmr3 subcomplex in the CRISPR-Cas RNA silencing effector complex.</title>
        <authorList>
            <person name="Osawa T."/>
            <person name="Inanaga H."/>
            <person name="Numata T."/>
        </authorList>
    </citation>
    <scope>X-RAY CRYSTALLOGRAPHY (2.5 ANGSTROMS) OF 216-871 IN COMPLEX WITH CMR3; ZINC AND NUCLEOTIDES</scope>
    <scope>SUBUNIT</scope>
    <scope>POSSIBLE RNA-BINDING</scope>
    <source>
        <strain>ATCC 43587 / DSM 3638 / JCM 8422 / Vc1</strain>
    </source>
</reference>
<reference key="6">
    <citation type="journal article" date="2013" name="Mol. Cell">
        <title>Structure of an RNA silencing complex of the CRISPR-Cas immune system.</title>
        <authorList>
            <person name="Spilman M."/>
            <person name="Cocozaki A."/>
            <person name="Hale C."/>
            <person name="Shao Y."/>
            <person name="Ramia N."/>
            <person name="Terns R."/>
            <person name="Terns M."/>
            <person name="Li H."/>
            <person name="Stagg S."/>
        </authorList>
    </citation>
    <scope>STRUCTURE BY ELECTRON MICROSCOPY (12.0 ANGSTROMS) OF WHOLE CMR COMPLEX WITH TARGET RNA</scope>
    <scope>SUBUNIT</scope>
    <scope>RNA-BINDING</scope>
    <source>
        <strain>ATCC 43587 / DSM 3638 / JCM 8422 / Vc1</strain>
    </source>
</reference>
<reference key="7">
    <citation type="journal article" date="2013" name="Structure">
        <title>Structure of the Cmr2-Cmr3 subcomplex of the Cmr RNA silencing complex.</title>
        <authorList>
            <person name="Shao Y."/>
            <person name="Cocozaki A.I."/>
            <person name="Ramia N.F."/>
            <person name="Terns R.M."/>
            <person name="Terns M.P."/>
            <person name="Li H."/>
        </authorList>
    </citation>
    <scope>X-RAY CRYSTALLOGRAPHY (2.8 ANGSTROMS) OF 215-871 IN COMPLEX WITH CMR3; ZINC AND ATP</scope>
    <scope>SUBUNIT</scope>
    <source>
        <strain>ATCC 43587 / DSM 3638 / JCM 8422 / Vc1</strain>
    </source>
</reference>
<reference key="8">
    <citation type="journal article" date="2014" name="Mol. Cell">
        <title>Structural model of a CRISPR RNA-silencing complex reveals the RNA-target cleavage activity in Cmr4.</title>
        <authorList>
            <person name="Benda C."/>
            <person name="Ebert J."/>
            <person name="Scheltema R.A."/>
            <person name="Schiller H.B."/>
            <person name="Baumgaertner M."/>
            <person name="Bonneau F."/>
            <person name="Mann M."/>
            <person name="Conti E."/>
        </authorList>
    </citation>
    <scope>X-RAY CRYSTALLOGRAPHY (3.0 ANGSTROMS) IN COMPLEX WITH MANGANESE AND ZINC</scope>
    <scope>FUNCTION</scope>
    <scope>COFACTOR</scope>
    <scope>INTERACTION WITH CMR3; CMR4 AND CMR5</scope>
    <scope>SUBUNIT</scope>
    <source>
        <strain>ATCC 43587 / DSM 3638 / JCM 8422 / Vc1</strain>
    </source>
</reference>
<proteinExistence type="evidence at protein level"/>
<name>CMR2_PYRFU</name>
<sequence length="871" mass="100984">MVNIKEKLFVYLHDPPDKALKIENHEERSKKILSSGNIQYSRTDKVKQADALSSKTQRFIIRTKENKEPVIDFLGRSSGKYFHVGYPVFIHPISTEIKRYETLEKYIDLGRSNRGERFVNEFLERVSKLEGDVLKEVFEDASNKFKGEESKQWAYIWQFYPVKLKEGVKEFAKSELKLKEEEAEKFAEEFVNLPADTRFPDHAIWTHLDLTSALSVKDPTLLRIKIVPVQPFIANSRKQLDLWASSHLLSMLMYKALEVIVDKFGPEHVIYPSLRDQPFFLKFYLGENIGDEILVANLPNKALAIVSGKEAEKIEEEIKKRIRDFLLQLYREAVDWAVENGVVKVDRSEKDSMLKEAYLKIVREYFTVSITWVSLSEKEDIYQVTENAGLSDEDVKKWLKFAEKKENSRVLERIAIYPLLVKILDSLGERKVTEERFEKSEQLKGWKCHVCGENLAIFGDMYDHDNLKSLWLDEEPLCPMCLIKRYYPVWIRSKTGQKIRFESVVDVALLYKNWRKIFDEKYGKDLVSKAREVSEDFVKDNMLVDSDLYYSSTWESGLSKKLKNKKEIDEEKVKEVVDFLNAAYKEIGNPPKYYAILVMDGDDMGKVISGEVLGEISTRIHPNIRDYVEIPEAKYYSTPQVHVAISQALANFSIREVRSVVKDEGLLIYAGGDDVLAILPVDKALEVAYKIRKEFGKSFENGSLLPGWKLSAGILIVHYKHPLYDALEKARDLLNNKAKNVPGKDTLAIGLLKRSGSYYISLVGWELIRVFYNSELRKKLLEEKGGVGKRFIYHVLREVDTWPKVGIDEMLKFEVIRHIRGRNKEETKELREKIYGEIKDLLEHVRGNNEVEKVRGLFTFLKIITDAEVFP</sequence>
<keyword id="KW-0002">3D-structure</keyword>
<keyword id="KW-0051">Antiviral defense</keyword>
<keyword id="KW-0963">Cytoplasm</keyword>
<keyword id="KW-0464">Manganese</keyword>
<keyword id="KW-0479">Metal-binding</keyword>
<keyword id="KW-0547">Nucleotide-binding</keyword>
<keyword id="KW-1185">Reference proteome</keyword>
<keyword id="KW-0694">RNA-binding</keyword>
<keyword id="KW-0862">Zinc</keyword>
<dbReference type="EMBL" id="AE009950">
    <property type="protein sequence ID" value="AAL81253.1"/>
    <property type="molecule type" value="Genomic_DNA"/>
</dbReference>
<dbReference type="PDB" id="3UNG">
    <property type="method" value="X-ray"/>
    <property type="resolution" value="2.31 A"/>
    <property type="chains" value="C=215-871"/>
</dbReference>
<dbReference type="PDB" id="3UR3">
    <property type="method" value="X-ray"/>
    <property type="resolution" value="2.40 A"/>
    <property type="chains" value="C=215-871"/>
</dbReference>
<dbReference type="PDB" id="3W2V">
    <property type="method" value="X-ray"/>
    <property type="resolution" value="2.60 A"/>
    <property type="chains" value="A=216-871"/>
</dbReference>
<dbReference type="PDB" id="3W2W">
    <property type="method" value="X-ray"/>
    <property type="resolution" value="2.50 A"/>
    <property type="chains" value="A=216-871"/>
</dbReference>
<dbReference type="PDB" id="3X1L">
    <property type="method" value="X-ray"/>
    <property type="resolution" value="2.10 A"/>
    <property type="chains" value="A=216-871"/>
</dbReference>
<dbReference type="PDB" id="4DOZ">
    <property type="method" value="X-ray"/>
    <property type="resolution" value="3.10 A"/>
    <property type="chains" value="A=195-871"/>
</dbReference>
<dbReference type="PDB" id="4H4K">
    <property type="method" value="X-ray"/>
    <property type="resolution" value="2.80 A"/>
    <property type="chains" value="C=215-871"/>
</dbReference>
<dbReference type="PDB" id="4W8Y">
    <property type="method" value="X-ray"/>
    <property type="resolution" value="3.00 A"/>
    <property type="chains" value="A/B=1-871"/>
</dbReference>
<dbReference type="PDBsum" id="3UNG"/>
<dbReference type="PDBsum" id="3UR3"/>
<dbReference type="PDBsum" id="3W2V"/>
<dbReference type="PDBsum" id="3W2W"/>
<dbReference type="PDBsum" id="3X1L"/>
<dbReference type="PDBsum" id="4DOZ"/>
<dbReference type="PDBsum" id="4H4K"/>
<dbReference type="PDBsum" id="4W8Y"/>
<dbReference type="EMDB" id="EMD-5740"/>
<dbReference type="SMR" id="Q8U1S6"/>
<dbReference type="DIP" id="DIP-54366N"/>
<dbReference type="IntAct" id="Q8U1S6">
    <property type="interactions" value="17"/>
</dbReference>
<dbReference type="STRING" id="186497.PF1129"/>
<dbReference type="PaxDb" id="186497-PF1129"/>
<dbReference type="KEGG" id="pfu:PF1129"/>
<dbReference type="PATRIC" id="fig|186497.12.peg.1190"/>
<dbReference type="eggNOG" id="arCOG02666">
    <property type="taxonomic scope" value="Archaea"/>
</dbReference>
<dbReference type="HOGENOM" id="CLU_012640_0_0_2"/>
<dbReference type="OrthoDB" id="148218at2157"/>
<dbReference type="PhylomeDB" id="Q8U1S6"/>
<dbReference type="EvolutionaryTrace" id="Q8U1S6"/>
<dbReference type="Proteomes" id="UP000001013">
    <property type="component" value="Chromosome"/>
</dbReference>
<dbReference type="GO" id="GO:0005737">
    <property type="term" value="C:cytoplasm"/>
    <property type="evidence" value="ECO:0007669"/>
    <property type="project" value="UniProtKB-SubCell"/>
</dbReference>
<dbReference type="GO" id="GO:0046872">
    <property type="term" value="F:metal ion binding"/>
    <property type="evidence" value="ECO:0007669"/>
    <property type="project" value="UniProtKB-KW"/>
</dbReference>
<dbReference type="GO" id="GO:0000166">
    <property type="term" value="F:nucleotide binding"/>
    <property type="evidence" value="ECO:0007669"/>
    <property type="project" value="UniProtKB-KW"/>
</dbReference>
<dbReference type="GO" id="GO:0003723">
    <property type="term" value="F:RNA binding"/>
    <property type="evidence" value="ECO:0007669"/>
    <property type="project" value="UniProtKB-KW"/>
</dbReference>
<dbReference type="GO" id="GO:0051607">
    <property type="term" value="P:defense response to virus"/>
    <property type="evidence" value="ECO:0007669"/>
    <property type="project" value="UniProtKB-KW"/>
</dbReference>
<dbReference type="CDD" id="cd09679">
    <property type="entry name" value="Cas10_III"/>
    <property type="match status" value="1"/>
</dbReference>
<dbReference type="Gene3D" id="3.30.70.270">
    <property type="match status" value="1"/>
</dbReference>
<dbReference type="Gene3D" id="3.30.70.2220">
    <property type="entry name" value="CRISPR-Cas system, Cmr2 subunit, D1 domain, cysteine cluster"/>
    <property type="match status" value="1"/>
</dbReference>
<dbReference type="Gene3D" id="1.10.10.1720">
    <property type="entry name" value="CRISPR-Cas system, Cmr2 subunit, D2 domain, helical bundle"/>
    <property type="match status" value="1"/>
</dbReference>
<dbReference type="Gene3D" id="1.20.120.1260">
    <property type="entry name" value="CRISPR-Cas system, Cmr2 subunit, D4 domain, six-helix bundle"/>
    <property type="match status" value="1"/>
</dbReference>
<dbReference type="InterPro" id="IPR054767">
    <property type="entry name" value="Cas10-Cmr2_palm2"/>
</dbReference>
<dbReference type="InterPro" id="IPR052117">
    <property type="entry name" value="Cas10/Csm1_subtype-III-A"/>
</dbReference>
<dbReference type="InterPro" id="IPR048693">
    <property type="entry name" value="Cmr2-like_C"/>
</dbReference>
<dbReference type="InterPro" id="IPR048694">
    <property type="entry name" value="Cmr2_hel_dom1"/>
</dbReference>
<dbReference type="InterPro" id="IPR038242">
    <property type="entry name" value="Cmr2_N"/>
</dbReference>
<dbReference type="InterPro" id="IPR048690">
    <property type="entry name" value="Cmr2_Zn-bd"/>
</dbReference>
<dbReference type="InterPro" id="IPR024615">
    <property type="entry name" value="CRISPR-assoc_Cmr2_N"/>
</dbReference>
<dbReference type="InterPro" id="IPR013407">
    <property type="entry name" value="CRISPR-assoc_prot_Cmr2"/>
</dbReference>
<dbReference type="InterPro" id="IPR000160">
    <property type="entry name" value="GGDEF_dom"/>
</dbReference>
<dbReference type="InterPro" id="IPR043128">
    <property type="entry name" value="Rev_trsase/Diguanyl_cyclase"/>
</dbReference>
<dbReference type="NCBIfam" id="TIGR02577">
    <property type="entry name" value="cas_TM1794_Cmr2"/>
    <property type="match status" value="1"/>
</dbReference>
<dbReference type="PANTHER" id="PTHR36528">
    <property type="entry name" value="CRISPR SYSTEM SINGLE-STRAND-SPECIFIC DEOXYRIBONUCLEASE CAS10/CSM1 (SUBTYPE III-A)"/>
    <property type="match status" value="1"/>
</dbReference>
<dbReference type="PANTHER" id="PTHR36528:SF1">
    <property type="entry name" value="CRISPR SYSTEM SINGLE-STRAND-SPECIFIC DEOXYRIBONUCLEASE CAS10_CSM1 (SUBTYPE III-A)"/>
    <property type="match status" value="1"/>
</dbReference>
<dbReference type="Pfam" id="PF22335">
    <property type="entry name" value="Cas10-Cmr2_palm2"/>
    <property type="match status" value="1"/>
</dbReference>
<dbReference type="Pfam" id="PF20822">
    <property type="entry name" value="Cmr2_hel_dom1"/>
    <property type="match status" value="1"/>
</dbReference>
<dbReference type="Pfam" id="PF20824">
    <property type="entry name" value="Cmr2_hel_dom2"/>
    <property type="match status" value="1"/>
</dbReference>
<dbReference type="Pfam" id="PF12469">
    <property type="entry name" value="Cmr2_N"/>
    <property type="match status" value="1"/>
</dbReference>
<dbReference type="Pfam" id="PF20823">
    <property type="entry name" value="Cmr2_Zn-bd"/>
    <property type="match status" value="1"/>
</dbReference>
<dbReference type="PROSITE" id="PS50887">
    <property type="entry name" value="GGDEF"/>
    <property type="match status" value="1"/>
</dbReference>
<accession>Q8U1S6</accession>
<comment type="function">
    <text evidence="2 3 8">CRISPR (clustered regularly interspaced short palindromic repeat), is an adaptive immune system that provides protection against mobile genetic elements (viruses, transposable elements and conjugative plasmids). CRISPR clusters contain sequences complementary to antecedent mobile elements and target invading nucleic acids. CRISPR clusters are transcribed and processed into CRISPR RNA (crRNA), formerly called psiRNA (prokaryotic silencing) in this organism. Part of the Cmr ribonucleoprotein complex which has divalent cation-dependent endoribonuclease activity specific for ssRNA complementary to the crRNA (target RNA), generating 5' hydroxy- and 3' phosphate or 2'-3' cyclic phosphate termini. Cmr4 is probably the subunit that cleaves target RNA (PubMed:25280103). Cmr complex does not cleave ssDNA complementary to the crRNA. Cleavage of target RNA is guided by the crRNA; substrate cleavage occurs a fixed distance (14 nt) from the 3' end of the crRNA. In vitro reconstitution shows Cmr1-2 and Cmr5 are not absolutely necessary for target cleavage (PubMed:19945378).</text>
</comment>
<comment type="cofactor">
    <cofactor>
        <name>Ca(2+)</name>
        <dbReference type="ChEBI" id="CHEBI:29108"/>
    </cofactor>
    <text evidence="3 10">Binds 2 Ca(2+) per subunit, this may not be the physiological cation.</text>
</comment>
<comment type="cofactor">
    <cofactor>
        <name>Mn(2+)</name>
        <dbReference type="ChEBI" id="CHEBI:29035"/>
    </cofactor>
    <text evidence="8">Binds 4 Mn(2+) per subunit.</text>
</comment>
<comment type="cofactor">
    <cofactor>
        <name>Zn(2+)</name>
        <dbReference type="ChEBI" id="CHEBI:29105"/>
    </cofactor>
    <text evidence="3 4 5 6 8">Binds 1 Zn(2+) ion per subunit.</text>
</comment>
<comment type="subunit">
    <text evidence="2 5 6 7 8">Part of the type III-B Cmr ribonucleoprotein (RNP) complex, an elongated RNP with Cmr2 and Cmr3 as the base, with Cmr4 and Cmr5 forming a helical core along the mature crRNA (39 or 45 nt in length), while the complex is capped by Cmr6 and Cmr1. The 5' end of the crRNA is bound to Cmr2 and Cmr3, while Cmr6 and a Cmr1 subunit (Cmr1-1 or Cmr1-2) cap the 3' end of the crRNA. The target RNA lies antiparallel to the crRNA, with its 5' end near Cmr1 and Cmr6 and its 3' end near Cmr2 and Cmr3; major target cleavage occurs nears the junction of Cmr1/Cmr6 and Cmr4/Cmr, with minor cleavage occurring at 6 nt intervals which coincide with the proposed spacing of Cmr4 subunits (PubMed:24119404, PubMed:25280103). Forms a 1:1 complex with Cmr3 (PubMed:23395183, PubMed:23583914). The Cmr2-Cmr3 complex non-specifically binds ss-target RNA and crRNA (PubMed:23583914). Interacts with Cmr3, Cmr4 and Cmr5 (PubMed:25280103).</text>
</comment>
<comment type="interaction">
    <interactant intactId="EBI-2504936">
        <id>Q8U1S6</id>
    </interactant>
    <interactant intactId="EBI-2504943">
        <id>Q8U1S7</id>
        <label>cmr3</label>
    </interactant>
    <organismsDiffer>false</organismsDiffer>
    <experiments>6</experiments>
</comment>
<comment type="subcellular location">
    <subcellularLocation>
        <location evidence="2">Cytoplasm</location>
    </subcellularLocation>
</comment>
<comment type="similarity">
    <text evidence="10">Belongs to the CRISPR system Cmr2 family.</text>
</comment>